<protein>
    <recommendedName>
        <fullName>Protein V</fullName>
    </recommendedName>
</protein>
<evidence type="ECO:0000250" key="1"/>
<evidence type="ECO:0000250" key="2">
    <source>
        <dbReference type="UniProtKB" id="P69282"/>
    </source>
</evidence>
<evidence type="ECO:0000256" key="3">
    <source>
        <dbReference type="SAM" id="MobiDB-lite"/>
    </source>
</evidence>
<evidence type="ECO:0000269" key="4">
    <source>
    </source>
</evidence>
<evidence type="ECO:0000305" key="5"/>
<organismHost>
    <name type="scientific">Cavia cutleri</name>
    <name type="common">Guinea pig</name>
    <dbReference type="NCBI Taxonomy" id="10144"/>
</organismHost>
<organismHost>
    <name type="scientific">Cricetidae sp.</name>
    <name type="common">Hamster</name>
    <dbReference type="NCBI Taxonomy" id="36483"/>
</organismHost>
<organismHost>
    <name type="scientific">Mus musculus</name>
    <name type="common">Mouse</name>
    <dbReference type="NCBI Taxonomy" id="10090"/>
</organismHost>
<organismHost>
    <name type="scientific">Rattus norvegicus</name>
    <name type="common">Rat</name>
    <dbReference type="NCBI Taxonomy" id="10116"/>
</organismHost>
<gene>
    <name type="primary">P/V/C</name>
</gene>
<name>V_SENDO</name>
<dbReference type="EMBL" id="AB005796">
    <property type="status" value="NOT_ANNOTATED_CDS"/>
    <property type="molecule type" value="Genomic_RNA"/>
</dbReference>
<dbReference type="SMR" id="P69287"/>
<dbReference type="Proteomes" id="UP000006563">
    <property type="component" value="Genome"/>
</dbReference>
<dbReference type="GO" id="GO:0030430">
    <property type="term" value="C:host cell cytoplasm"/>
    <property type="evidence" value="ECO:0007669"/>
    <property type="project" value="UniProtKB-SubCell"/>
</dbReference>
<dbReference type="GO" id="GO:0046872">
    <property type="term" value="F:metal ion binding"/>
    <property type="evidence" value="ECO:0007669"/>
    <property type="project" value="UniProtKB-KW"/>
</dbReference>
<dbReference type="GO" id="GO:0039548">
    <property type="term" value="P:symbiont-mediated suppression of host cytoplasmic pattern recognition receptor signaling pathway via inhibition of IRF3 activity"/>
    <property type="evidence" value="ECO:0007669"/>
    <property type="project" value="UniProtKB-KW"/>
</dbReference>
<dbReference type="GO" id="GO:0039554">
    <property type="term" value="P:symbiont-mediated suppression of host cytoplasmic pattern recognition receptor signaling pathway via inhibition of MDA-5 activity"/>
    <property type="evidence" value="ECO:0007669"/>
    <property type="project" value="UniProtKB-KW"/>
</dbReference>
<dbReference type="FunFam" id="4.10.80.340:FF:000001">
    <property type="entry name" value="Protein V"/>
    <property type="match status" value="1"/>
</dbReference>
<dbReference type="Gene3D" id="4.10.80.340">
    <property type="match status" value="1"/>
</dbReference>
<dbReference type="InterPro" id="IPR024279">
    <property type="entry name" value="Paramyx_V_Zn-bd"/>
</dbReference>
<dbReference type="Pfam" id="PF13008">
    <property type="entry name" value="zf-Paramyx-P"/>
    <property type="match status" value="1"/>
</dbReference>
<sequence length="369" mass="40254">MDQDALISKEDSEVEREASGGRESLSDVIGFLDAVLSSEPTDIGGDRSWLHNTINTLQRPGSTHRVKGEGEGEVSTSSTQDNRSGEESRVSGGTSEPEAEAHARNVDKQNIHWATGRGASTDSVPQDLGNGRDSGILEDPPNEGGYPRSGAEDENREMAANPDKRGEDQAEGLPEEIRRSAPLPDEREGRADNNGRGVEPGSPHSARVTGVLVIPSPELEEAVLQRNKRRPANSGSRSLTPVVVPSTRSPPPDHDNSTRSPPRKPPTTQDEHTNPRNTPAVRIKDRRPPTGTRSAPDRPTDGYPTHPSPETDATKKGHRREHIIYERDGYIVNESWCNPVCSRIRVVPRRELCVCKACPKICKLCRDGI</sequence>
<proteinExistence type="evidence at protein level"/>
<feature type="chain" id="PRO_0000142828" description="Protein V">
    <location>
        <begin position="1"/>
        <end position="369"/>
    </location>
</feature>
<feature type="region of interest" description="Disordered" evidence="3">
    <location>
        <begin position="1"/>
        <end position="23"/>
    </location>
</feature>
<feature type="region of interest" description="Disordered" evidence="3">
    <location>
        <begin position="54"/>
        <end position="320"/>
    </location>
</feature>
<feature type="compositionally biased region" description="Basic and acidic residues" evidence="3">
    <location>
        <begin position="7"/>
        <end position="20"/>
    </location>
</feature>
<feature type="compositionally biased region" description="Basic and acidic residues" evidence="3">
    <location>
        <begin position="99"/>
        <end position="110"/>
    </location>
</feature>
<feature type="compositionally biased region" description="Basic and acidic residues" evidence="3">
    <location>
        <begin position="150"/>
        <end position="168"/>
    </location>
</feature>
<feature type="compositionally biased region" description="Basic and acidic residues" evidence="3">
    <location>
        <begin position="175"/>
        <end position="193"/>
    </location>
</feature>
<feature type="binding site" evidence="1">
    <location>
        <position position="318"/>
    </location>
    <ligand>
        <name>Zn(2+)</name>
        <dbReference type="ChEBI" id="CHEBI:29105"/>
        <label>1</label>
    </ligand>
</feature>
<feature type="binding site" evidence="1">
    <location>
        <position position="337"/>
    </location>
    <ligand>
        <name>Zn(2+)</name>
        <dbReference type="ChEBI" id="CHEBI:29105"/>
        <label>1</label>
    </ligand>
</feature>
<feature type="binding site" evidence="1">
    <location>
        <position position="341"/>
    </location>
    <ligand>
        <name>Zn(2+)</name>
        <dbReference type="ChEBI" id="CHEBI:29105"/>
        <label>2</label>
    </ligand>
</feature>
<feature type="binding site" evidence="1">
    <location>
        <position position="353"/>
    </location>
    <ligand>
        <name>Zn(2+)</name>
        <dbReference type="ChEBI" id="CHEBI:29105"/>
        <label>2</label>
    </ligand>
</feature>
<feature type="binding site" evidence="1">
    <location>
        <position position="355"/>
    </location>
    <ligand>
        <name>Zn(2+)</name>
        <dbReference type="ChEBI" id="CHEBI:29105"/>
        <label>2</label>
    </ligand>
</feature>
<feature type="binding site" evidence="1">
    <location>
        <position position="358"/>
    </location>
    <ligand>
        <name>Zn(2+)</name>
        <dbReference type="ChEBI" id="CHEBI:29105"/>
        <label>2</label>
    </ligand>
</feature>
<feature type="binding site" evidence="1">
    <location>
        <position position="362"/>
    </location>
    <ligand>
        <name>Zn(2+)</name>
        <dbReference type="ChEBI" id="CHEBI:29105"/>
        <label>1</label>
    </ligand>
</feature>
<feature type="binding site" evidence="1">
    <location>
        <position position="365"/>
    </location>
    <ligand>
        <name>Zn(2+)</name>
        <dbReference type="ChEBI" id="CHEBI:29105"/>
        <label>1</label>
    </ligand>
</feature>
<feature type="modified residue" description="Phosphoserine; by host" evidence="1">
    <location>
        <position position="249"/>
    </location>
</feature>
<feature type="modified residue" description="Phosphoserine; by host" evidence="1">
    <location>
        <position position="257"/>
    </location>
</feature>
<feature type="modified residue" description="Phosphoserine; by host" evidence="1">
    <location>
        <position position="260"/>
    </location>
</feature>
<organism>
    <name type="scientific">Sendai virus (strain Ohita)</name>
    <name type="common">SeV</name>
    <dbReference type="NCBI Taxonomy" id="302272"/>
    <lineage>
        <taxon>Viruses</taxon>
        <taxon>Riboviria</taxon>
        <taxon>Orthornavirae</taxon>
        <taxon>Negarnaviricota</taxon>
        <taxon>Haploviricotina</taxon>
        <taxon>Monjiviricetes</taxon>
        <taxon>Mononegavirales</taxon>
        <taxon>Paramyxoviridae</taxon>
        <taxon>Feraresvirinae</taxon>
        <taxon>Respirovirus</taxon>
        <taxon>Respirovirus muris</taxon>
    </lineage>
</organism>
<comment type="function">
    <text evidence="2 4">Plays an essential role in the inhibition of host immune response. Prevents the establishment of cellular antiviral state by blocking interferon-alpha/beta (IFN-alpha/beta) production and signaling pathway. Interacts with host IFIH1/MDA5 and DHX58/LGP2 to inhibit the transduction pathway involved in the activation of IFN-beta promoter, thus protecting the virus against cell antiviral state (PubMed:22301134). Also interacts with and inhibits host IRF3 (By similarity). Blocks the type I interferon signaling pathway by disrupting the RIG-I signaling pathway (By similarity).</text>
</comment>
<comment type="subunit">
    <text evidence="2">Interacts with host IFIH1/MDA5 and DHX58/LGP2. Interacts with host IRF3. Interacts with host RIGI regulatory protein (via CARDs domain) and host TRIM25 (via SPRY domain); these interactions prevent TRIM25-mediated ubiquitination of RIG-I and disrupts downstream RIG-I signaling.</text>
</comment>
<comment type="subcellular location">
    <subcellularLocation>
        <location evidence="1">Host cytoplasm</location>
    </subcellularLocation>
</comment>
<comment type="domain">
    <text evidence="1">The C-terminal zinc-binding domain is involved in binding to IFIH1/MDA5. This domain is also involved in viral pathogenesis (By similarity).</text>
</comment>
<comment type="RNA editing">
    <location>
        <position position="318" evidence="1"/>
    </location>
    <text evidence="1">Partially edited. RNA editing at this position consists of an insertion of one or two guanine nucleotides. The sequence displayed here is the V protein, derived from the +1G edited RNA. The unedited RNA gives rise to the P protein (AC O57285), the +2G edited RNA gives rise to the W protein (AC P69288) (By similarity).</text>
</comment>
<comment type="miscellaneous">
    <text>The P/V/C gene has two overlapping open reading frames. One encodes the P/V/W proteins and the other the C/Y proteins.</text>
</comment>
<comment type="similarity">
    <text evidence="5">Belongs to the paramyxoviruses V protein family.</text>
</comment>
<keyword id="KW-1035">Host cytoplasm</keyword>
<keyword id="KW-0945">Host-virus interaction</keyword>
<keyword id="KW-1090">Inhibition of host innate immune response by virus</keyword>
<keyword id="KW-1092">Inhibition of host IRF3 by virus</keyword>
<keyword id="KW-1089">Inhibition of host MDA5 by virus</keyword>
<keyword id="KW-1113">Inhibition of host RLR pathway by virus</keyword>
<keyword id="KW-0922">Interferon antiviral system evasion</keyword>
<keyword id="KW-0479">Metal-binding</keyword>
<keyword id="KW-0597">Phosphoprotein</keyword>
<keyword id="KW-0691">RNA editing</keyword>
<keyword id="KW-0899">Viral immunoevasion</keyword>
<keyword id="KW-0862">Zinc</keyword>
<reference key="1">
    <citation type="journal article" date="1997" name="J. Gen. Virol.">
        <title>Isolation of an avirulent mutant of Sendai virus with two amino acid mutations from a highly virulent field strain through adaptation to LLC-MK2 cells.</title>
        <authorList>
            <person name="Itoh M."/>
            <person name="Isegawa Y."/>
            <person name="Hotta H."/>
            <person name="Homma M."/>
        </authorList>
    </citation>
    <scope>NUCLEOTIDE SEQUENCE [GENOMIC RNA]</scope>
</reference>
<reference key="2">
    <citation type="journal article" date="2012" name="J. Virol.">
        <title>Paramyxovirus V proteins interact with the RNA Helicase LGP2 to inhibit RIG-I-dependent interferon induction.</title>
        <authorList>
            <person name="Childs K."/>
            <person name="Randall R."/>
            <person name="Goodbourn S."/>
        </authorList>
    </citation>
    <scope>FUNCTION</scope>
    <scope>INTERACTION WITH HOST DHX58</scope>
</reference>
<accession>P69287</accession>